<evidence type="ECO:0000255" key="1">
    <source>
        <dbReference type="HAMAP-Rule" id="MF_00254"/>
    </source>
</evidence>
<name>SYGA_BRAHW</name>
<keyword id="KW-0030">Aminoacyl-tRNA synthetase</keyword>
<keyword id="KW-0067">ATP-binding</keyword>
<keyword id="KW-0963">Cytoplasm</keyword>
<keyword id="KW-0436">Ligase</keyword>
<keyword id="KW-0547">Nucleotide-binding</keyword>
<keyword id="KW-0648">Protein biosynthesis</keyword>
<proteinExistence type="inferred from homology"/>
<organism>
    <name type="scientific">Brachyspira hyodysenteriae (strain ATCC 49526 / WA1)</name>
    <dbReference type="NCBI Taxonomy" id="565034"/>
    <lineage>
        <taxon>Bacteria</taxon>
        <taxon>Pseudomonadati</taxon>
        <taxon>Spirochaetota</taxon>
        <taxon>Spirochaetia</taxon>
        <taxon>Brachyspirales</taxon>
        <taxon>Brachyspiraceae</taxon>
        <taxon>Brachyspira</taxon>
    </lineage>
</organism>
<protein>
    <recommendedName>
        <fullName evidence="1">Glycine--tRNA ligase alpha subunit</fullName>
        <ecNumber evidence="1">6.1.1.14</ecNumber>
    </recommendedName>
    <alternativeName>
        <fullName evidence="1">Glycyl-tRNA synthetase alpha subunit</fullName>
        <shortName evidence="1">GlyRS</shortName>
    </alternativeName>
</protein>
<feature type="chain" id="PRO_1000125536" description="Glycine--tRNA ligase alpha subunit">
    <location>
        <begin position="1"/>
        <end position="290"/>
    </location>
</feature>
<sequence length="290" mass="33451">MTFTDLIMTLNKFWSENGCIIQQGYDLEVGAGTFNPATALRALGPEPFSVAYVEPSRRPTDGRYGENPNRLQHYYQYQVIMKPSPENIQDLYIQSLEALGISFKDHDIRFVHDDWESPTLGAWGLGWEVWLDGMEITQFTYFQAVGGINLKPITGEITYGLERICMYLQNIDNVYDLEWGHGIKYGDVHLQGEKEFSKYNFEVADTDMYFRHFKEYEEECDRCLANGCVLPAYDMVMKSSHVFNMLDARNAISVTERAGYIARVRELMKKVSAAYIESREKLGYPLIKNK</sequence>
<accession>C0R0J6</accession>
<comment type="catalytic activity">
    <reaction evidence="1">
        <text>tRNA(Gly) + glycine + ATP = glycyl-tRNA(Gly) + AMP + diphosphate</text>
        <dbReference type="Rhea" id="RHEA:16013"/>
        <dbReference type="Rhea" id="RHEA-COMP:9664"/>
        <dbReference type="Rhea" id="RHEA-COMP:9683"/>
        <dbReference type="ChEBI" id="CHEBI:30616"/>
        <dbReference type="ChEBI" id="CHEBI:33019"/>
        <dbReference type="ChEBI" id="CHEBI:57305"/>
        <dbReference type="ChEBI" id="CHEBI:78442"/>
        <dbReference type="ChEBI" id="CHEBI:78522"/>
        <dbReference type="ChEBI" id="CHEBI:456215"/>
        <dbReference type="EC" id="6.1.1.14"/>
    </reaction>
</comment>
<comment type="subunit">
    <text evidence="1">Tetramer of two alpha and two beta subunits.</text>
</comment>
<comment type="subcellular location">
    <subcellularLocation>
        <location evidence="1">Cytoplasm</location>
    </subcellularLocation>
</comment>
<comment type="similarity">
    <text evidence="1">Belongs to the class-II aminoacyl-tRNA synthetase family.</text>
</comment>
<gene>
    <name evidence="1" type="primary">glyQ</name>
    <name type="ordered locus">BHWA1_01154</name>
</gene>
<dbReference type="EC" id="6.1.1.14" evidence="1"/>
<dbReference type="EMBL" id="CP001357">
    <property type="protein sequence ID" value="ACN83634.1"/>
    <property type="molecule type" value="Genomic_DNA"/>
</dbReference>
<dbReference type="RefSeq" id="WP_012670681.1">
    <property type="nucleotide sequence ID" value="NC_012225.1"/>
</dbReference>
<dbReference type="SMR" id="C0R0J6"/>
<dbReference type="STRING" id="565034.BHWA1_01154"/>
<dbReference type="KEGG" id="bhy:BHWA1_01154"/>
<dbReference type="eggNOG" id="COG0752">
    <property type="taxonomic scope" value="Bacteria"/>
</dbReference>
<dbReference type="HOGENOM" id="CLU_057066_1_0_12"/>
<dbReference type="Proteomes" id="UP000001803">
    <property type="component" value="Chromosome"/>
</dbReference>
<dbReference type="GO" id="GO:0005829">
    <property type="term" value="C:cytosol"/>
    <property type="evidence" value="ECO:0007669"/>
    <property type="project" value="TreeGrafter"/>
</dbReference>
<dbReference type="GO" id="GO:0005524">
    <property type="term" value="F:ATP binding"/>
    <property type="evidence" value="ECO:0007669"/>
    <property type="project" value="UniProtKB-UniRule"/>
</dbReference>
<dbReference type="GO" id="GO:0004820">
    <property type="term" value="F:glycine-tRNA ligase activity"/>
    <property type="evidence" value="ECO:0007669"/>
    <property type="project" value="UniProtKB-UniRule"/>
</dbReference>
<dbReference type="GO" id="GO:0006426">
    <property type="term" value="P:glycyl-tRNA aminoacylation"/>
    <property type="evidence" value="ECO:0007669"/>
    <property type="project" value="UniProtKB-UniRule"/>
</dbReference>
<dbReference type="CDD" id="cd00733">
    <property type="entry name" value="GlyRS_alpha_core"/>
    <property type="match status" value="1"/>
</dbReference>
<dbReference type="FunFam" id="3.30.930.10:FF:000006">
    <property type="entry name" value="Glycine--tRNA ligase alpha subunit"/>
    <property type="match status" value="1"/>
</dbReference>
<dbReference type="Gene3D" id="3.30.930.10">
    <property type="entry name" value="Bira Bifunctional Protein, Domain 2"/>
    <property type="match status" value="1"/>
</dbReference>
<dbReference type="Gene3D" id="1.20.58.180">
    <property type="entry name" value="Class II aaRS and biotin synthetases, domain 2"/>
    <property type="match status" value="1"/>
</dbReference>
<dbReference type="HAMAP" id="MF_00254">
    <property type="entry name" value="Gly_tRNA_synth_alpha"/>
    <property type="match status" value="1"/>
</dbReference>
<dbReference type="InterPro" id="IPR045864">
    <property type="entry name" value="aa-tRNA-synth_II/BPL/LPL"/>
</dbReference>
<dbReference type="InterPro" id="IPR006194">
    <property type="entry name" value="Gly-tRNA-synth_heterodimer"/>
</dbReference>
<dbReference type="InterPro" id="IPR002310">
    <property type="entry name" value="Gly-tRNA_ligase_asu"/>
</dbReference>
<dbReference type="NCBIfam" id="TIGR00388">
    <property type="entry name" value="glyQ"/>
    <property type="match status" value="1"/>
</dbReference>
<dbReference type="NCBIfam" id="NF006827">
    <property type="entry name" value="PRK09348.1"/>
    <property type="match status" value="1"/>
</dbReference>
<dbReference type="PANTHER" id="PTHR30075:SF2">
    <property type="entry name" value="GLYCINE--TRNA LIGASE, CHLOROPLASTIC_MITOCHONDRIAL 2"/>
    <property type="match status" value="1"/>
</dbReference>
<dbReference type="PANTHER" id="PTHR30075">
    <property type="entry name" value="GLYCYL-TRNA SYNTHETASE"/>
    <property type="match status" value="1"/>
</dbReference>
<dbReference type="Pfam" id="PF02091">
    <property type="entry name" value="tRNA-synt_2e"/>
    <property type="match status" value="1"/>
</dbReference>
<dbReference type="PRINTS" id="PR01044">
    <property type="entry name" value="TRNASYNTHGA"/>
</dbReference>
<dbReference type="SUPFAM" id="SSF55681">
    <property type="entry name" value="Class II aaRS and biotin synthetases"/>
    <property type="match status" value="1"/>
</dbReference>
<dbReference type="PROSITE" id="PS50861">
    <property type="entry name" value="AA_TRNA_LIGASE_II_GLYAB"/>
    <property type="match status" value="1"/>
</dbReference>
<reference key="1">
    <citation type="journal article" date="2009" name="PLoS ONE">
        <title>Genome sequence of the pathogenic intestinal spirochete Brachyspira hyodysenteriae reveals adaptations to its lifestyle in the porcine large intestine.</title>
        <authorList>
            <person name="Bellgard M.I."/>
            <person name="Wanchanthuek P."/>
            <person name="La T."/>
            <person name="Ryan K."/>
            <person name="Moolhuijzen P."/>
            <person name="Albertyn Z."/>
            <person name="Shaban B."/>
            <person name="Motro Y."/>
            <person name="Dunn D.S."/>
            <person name="Schibeci D."/>
            <person name="Hunter A."/>
            <person name="Barrero R."/>
            <person name="Phillips N.D."/>
            <person name="Hampson D.J."/>
        </authorList>
    </citation>
    <scope>NUCLEOTIDE SEQUENCE [LARGE SCALE GENOMIC DNA]</scope>
    <source>
        <strain>ATCC 49526 / WA1</strain>
    </source>
</reference>